<comment type="function">
    <text evidence="2 3">Part of the tripartite ATP-independent periplasmic (TRAP) transport system SiaPQM that catalyzes unidirectional Na(+)-dependent sialic acid uptake.</text>
</comment>
<comment type="subunit">
    <text evidence="2">The complex comprises the extracytoplasmic solute receptor protein SiaP, and the two transmembrane proteins SiaQ and SiaM. SiaQ and SiaM form a tight 1:1 complex.</text>
</comment>
<comment type="subcellular location">
    <subcellularLocation>
        <location evidence="2">Cell inner membrane</location>
        <topology evidence="1">Multi-pass membrane protein</topology>
    </subcellularLocation>
</comment>
<comment type="disruption phenotype">
    <text evidence="3">Deletion mutant is unable to grow on N-acetylneuraminic acid (Neu5Ac) as the sole carbon source.</text>
</comment>
<comment type="similarity">
    <text evidence="5">Belongs to the TRAP transporter large permease family.</text>
</comment>
<evidence type="ECO:0000255" key="1"/>
<evidence type="ECO:0000269" key="2">
    <source>
    </source>
</evidence>
<evidence type="ECO:0000269" key="3">
    <source>
    </source>
</evidence>
<evidence type="ECO:0000303" key="4">
    <source>
    </source>
</evidence>
<evidence type="ECO:0000305" key="5"/>
<evidence type="ECO:0000312" key="6">
    <source>
        <dbReference type="EMBL" id="AAF94926.1"/>
    </source>
</evidence>
<proteinExistence type="evidence at protein level"/>
<reference key="1">
    <citation type="journal article" date="2000" name="Nature">
        <title>DNA sequence of both chromosomes of the cholera pathogen Vibrio cholerae.</title>
        <authorList>
            <person name="Heidelberg J.F."/>
            <person name="Eisen J.A."/>
            <person name="Nelson W.C."/>
            <person name="Clayton R.A."/>
            <person name="Gwinn M.L."/>
            <person name="Dodson R.J."/>
            <person name="Haft D.H."/>
            <person name="Hickey E.K."/>
            <person name="Peterson J.D."/>
            <person name="Umayam L.A."/>
            <person name="Gill S.R."/>
            <person name="Nelson K.E."/>
            <person name="Read T.D."/>
            <person name="Tettelin H."/>
            <person name="Richardson D.L."/>
            <person name="Ermolaeva M.D."/>
            <person name="Vamathevan J.J."/>
            <person name="Bass S."/>
            <person name="Qin H."/>
            <person name="Dragoi I."/>
            <person name="Sellers P."/>
            <person name="McDonald L.A."/>
            <person name="Utterback T.R."/>
            <person name="Fleischmann R.D."/>
            <person name="Nierman W.C."/>
            <person name="White O."/>
            <person name="Salzberg S.L."/>
            <person name="Smith H.O."/>
            <person name="Colwell R.R."/>
            <person name="Mekalanos J.J."/>
            <person name="Venter J.C."/>
            <person name="Fraser C.M."/>
        </authorList>
    </citation>
    <scope>NUCLEOTIDE SEQUENCE [LARGE SCALE GENOMIC DNA]</scope>
    <source>
        <strain>ATCC 39315 / El Tor Inaba N16961</strain>
    </source>
</reference>
<reference key="2">
    <citation type="journal article" date="2012" name="J. Biol. Chem.">
        <title>The membrane proteins SiaQ and SiaM form an essential stoichiometric complex in the sialic acid tripartite ATP-independent periplasmic (TRAP) transporter SiaPQM (VC1777-1779) from Vibrio cholerae.</title>
        <authorList>
            <person name="Mulligan C."/>
            <person name="Leech A.P."/>
            <person name="Kelly D.J."/>
            <person name="Thomas G.H."/>
        </authorList>
    </citation>
    <scope>FUNCTION</scope>
    <scope>SUBUNIT</scope>
    <scope>SUBCELLULAR LOCATION</scope>
</reference>
<reference key="3">
    <citation type="journal article" date="2012" name="Microbiology">
        <title>The VC1777-VC1779 proteins are members of a sialic acid-specific subfamily of TRAP transporters (SiaPQM) and constitute the sole route of sialic acid uptake in the human pathogen Vibrio cholerae.</title>
        <authorList>
            <person name="Chowdhury N."/>
            <person name="Norris J."/>
            <person name="McAlister E."/>
            <person name="Lau S.Y."/>
            <person name="Thomas G.H."/>
            <person name="Boyd E.F."/>
        </authorList>
    </citation>
    <scope>FUNCTION</scope>
    <scope>DISRUPTION PHENOTYPE</scope>
</reference>
<sequence length="427" mass="45457">MVGSIFGWLGLLFAGMPVGFSLIFVALAFLILTNSTGINFAAQQMLGGIDNFTLLAVPFFVLTGHLMNSAGITERIFNFAKSLVGHITGSLGHVNIMASLLFSGMSGSALADAGGLGQLEIKSMRDAKYHDDFAGGLTAASCIIGPLVPPSVPLVIYGVVSNTSIGALFLAGAIPGLLCCIALMVMSYFICKKRGYMTLPKASRREQFKSLKEAFLSLLTPVIIIGGIFSGKFTPTEAAAVSSLYALFLGTVVYNTLTLQGFIEILKETVNTTAVVALMVMGVTVFGWIVAREQLPQMLADYFLTISDNPLVLLLLINLLLLFLGTFIESLALLLLLVPFLVPVASAVGIDPVHFGVMAILNLMIGILTPPMGMALYVVSRVGDIPFHTLTRGVLPLLVPLFIVLALVAVFPQFTLLLPELFLGYGQ</sequence>
<name>SIAM_VIBCH</name>
<accession>Q9KR66</accession>
<feature type="chain" id="PRO_0000435368" description="Sialic acid TRAP transporter large permease protein SiaM">
    <location>
        <begin position="1"/>
        <end position="427"/>
    </location>
</feature>
<feature type="transmembrane region" description="Helical" evidence="1">
    <location>
        <begin position="11"/>
        <end position="31"/>
    </location>
</feature>
<feature type="transmembrane region" description="Helical" evidence="1">
    <location>
        <begin position="52"/>
        <end position="72"/>
    </location>
</feature>
<feature type="transmembrane region" description="Helical" evidence="1">
    <location>
        <begin position="82"/>
        <end position="102"/>
    </location>
</feature>
<feature type="transmembrane region" description="Helical" evidence="1">
    <location>
        <begin position="140"/>
        <end position="160"/>
    </location>
</feature>
<feature type="transmembrane region" description="Helical" evidence="1">
    <location>
        <begin position="165"/>
        <end position="185"/>
    </location>
</feature>
<feature type="transmembrane region" description="Helical" evidence="1">
    <location>
        <begin position="214"/>
        <end position="234"/>
    </location>
</feature>
<feature type="transmembrane region" description="Helical" evidence="1">
    <location>
        <begin position="246"/>
        <end position="266"/>
    </location>
</feature>
<feature type="transmembrane region" description="Helical" evidence="1">
    <location>
        <begin position="270"/>
        <end position="290"/>
    </location>
</feature>
<feature type="transmembrane region" description="Helical" evidence="1">
    <location>
        <begin position="301"/>
        <end position="321"/>
    </location>
</feature>
<feature type="transmembrane region" description="Helical" evidence="1">
    <location>
        <begin position="322"/>
        <end position="342"/>
    </location>
</feature>
<feature type="transmembrane region" description="Helical" evidence="1">
    <location>
        <begin position="348"/>
        <end position="368"/>
    </location>
</feature>
<feature type="transmembrane region" description="Helical" evidence="1">
    <location>
        <begin position="394"/>
        <end position="414"/>
    </location>
</feature>
<dbReference type="EMBL" id="AE003852">
    <property type="protein sequence ID" value="AAF94926.1"/>
    <property type="molecule type" value="Genomic_DNA"/>
</dbReference>
<dbReference type="PIR" id="F82157">
    <property type="entry name" value="F82157"/>
</dbReference>
<dbReference type="RefSeq" id="NP_231412.1">
    <property type="nucleotide sequence ID" value="NC_002505.1"/>
</dbReference>
<dbReference type="RefSeq" id="WP_000233105.1">
    <property type="nucleotide sequence ID" value="NZ_LT906614.1"/>
</dbReference>
<dbReference type="SMR" id="Q9KR66"/>
<dbReference type="STRING" id="243277.VC_1777"/>
<dbReference type="DNASU" id="2613657"/>
<dbReference type="EnsemblBacteria" id="AAF94926">
    <property type="protein sequence ID" value="AAF94926"/>
    <property type="gene ID" value="VC_1777"/>
</dbReference>
<dbReference type="KEGG" id="vch:VC_1777"/>
<dbReference type="PATRIC" id="fig|243277.26.peg.1697"/>
<dbReference type="eggNOG" id="COG1593">
    <property type="taxonomic scope" value="Bacteria"/>
</dbReference>
<dbReference type="HOGENOM" id="CLU_019824_4_1_6"/>
<dbReference type="Proteomes" id="UP000000584">
    <property type="component" value="Chromosome 1"/>
</dbReference>
<dbReference type="GO" id="GO:0005886">
    <property type="term" value="C:plasma membrane"/>
    <property type="evidence" value="ECO:0000318"/>
    <property type="project" value="GO_Central"/>
</dbReference>
<dbReference type="GO" id="GO:0022857">
    <property type="term" value="F:transmembrane transporter activity"/>
    <property type="evidence" value="ECO:0000318"/>
    <property type="project" value="GO_Central"/>
</dbReference>
<dbReference type="InterPro" id="IPR010656">
    <property type="entry name" value="DctM"/>
</dbReference>
<dbReference type="InterPro" id="IPR004681">
    <property type="entry name" value="TRAP_DctM"/>
</dbReference>
<dbReference type="NCBIfam" id="TIGR00786">
    <property type="entry name" value="dctM"/>
    <property type="match status" value="1"/>
</dbReference>
<dbReference type="PANTHER" id="PTHR33362:SF3">
    <property type="entry name" value="SIALIC ACID TRAP TRANSPORTER PERMEASE PROTEIN SIAT"/>
    <property type="match status" value="1"/>
</dbReference>
<dbReference type="PANTHER" id="PTHR33362">
    <property type="entry name" value="SIALIC ACID TRAP TRANSPORTER PERMEASE PROTEIN SIAT-RELATED"/>
    <property type="match status" value="1"/>
</dbReference>
<dbReference type="Pfam" id="PF06808">
    <property type="entry name" value="DctM"/>
    <property type="match status" value="1"/>
</dbReference>
<dbReference type="PIRSF" id="PIRSF006066">
    <property type="entry name" value="HI0050"/>
    <property type="match status" value="1"/>
</dbReference>
<protein>
    <recommendedName>
        <fullName evidence="5">Sialic acid TRAP transporter large permease protein SiaM</fullName>
    </recommendedName>
</protein>
<gene>
    <name evidence="4" type="primary">siaM</name>
    <name evidence="6" type="ordered locus">VC_1777</name>
</gene>
<keyword id="KW-0997">Cell inner membrane</keyword>
<keyword id="KW-1003">Cell membrane</keyword>
<keyword id="KW-0472">Membrane</keyword>
<keyword id="KW-1185">Reference proteome</keyword>
<keyword id="KW-0762">Sugar transport</keyword>
<keyword id="KW-0812">Transmembrane</keyword>
<keyword id="KW-1133">Transmembrane helix</keyword>
<keyword id="KW-0813">Transport</keyword>
<organism>
    <name type="scientific">Vibrio cholerae serotype O1 (strain ATCC 39315 / El Tor Inaba N16961)</name>
    <dbReference type="NCBI Taxonomy" id="243277"/>
    <lineage>
        <taxon>Bacteria</taxon>
        <taxon>Pseudomonadati</taxon>
        <taxon>Pseudomonadota</taxon>
        <taxon>Gammaproteobacteria</taxon>
        <taxon>Vibrionales</taxon>
        <taxon>Vibrionaceae</taxon>
        <taxon>Vibrio</taxon>
    </lineage>
</organism>